<sequence length="86" mass="9895">MSLLDYFKSSKKPATAVTAKERLQIIVAHQRGERDAPDYFPQMKQEIIEVIKKYVHIDPEQVSVQLDKNDNKLSVLELNVTLPEKS</sequence>
<comment type="function">
    <text evidence="1">Prevents the cell division inhibition by proteins MinC and MinD at internal division sites while permitting inhibition at polar sites. This ensures cell division at the proper site by restricting the formation of a division septum at the midpoint of the long axis of the cell.</text>
</comment>
<comment type="similarity">
    <text evidence="1">Belongs to the MinE family.</text>
</comment>
<feature type="chain" id="PRO_1000114245" description="Cell division topological specificity factor">
    <location>
        <begin position="1"/>
        <end position="86"/>
    </location>
</feature>
<evidence type="ECO:0000255" key="1">
    <source>
        <dbReference type="HAMAP-Rule" id="MF_00262"/>
    </source>
</evidence>
<dbReference type="EMBL" id="CP000961">
    <property type="protein sequence ID" value="ACA86396.1"/>
    <property type="molecule type" value="Genomic_DNA"/>
</dbReference>
<dbReference type="RefSeq" id="WP_012324741.1">
    <property type="nucleotide sequence ID" value="NC_010506.1"/>
</dbReference>
<dbReference type="SMR" id="B1KRI9"/>
<dbReference type="STRING" id="392500.Swoo_2112"/>
<dbReference type="KEGG" id="swd:Swoo_2112"/>
<dbReference type="eggNOG" id="COG0851">
    <property type="taxonomic scope" value="Bacteria"/>
</dbReference>
<dbReference type="HOGENOM" id="CLU_137929_2_2_6"/>
<dbReference type="Proteomes" id="UP000002168">
    <property type="component" value="Chromosome"/>
</dbReference>
<dbReference type="GO" id="GO:0051301">
    <property type="term" value="P:cell division"/>
    <property type="evidence" value="ECO:0007669"/>
    <property type="project" value="UniProtKB-KW"/>
</dbReference>
<dbReference type="GO" id="GO:0032955">
    <property type="term" value="P:regulation of division septum assembly"/>
    <property type="evidence" value="ECO:0007669"/>
    <property type="project" value="InterPro"/>
</dbReference>
<dbReference type="FunFam" id="3.30.1070.10:FF:000001">
    <property type="entry name" value="Cell division topological specificity factor"/>
    <property type="match status" value="1"/>
</dbReference>
<dbReference type="Gene3D" id="3.30.1070.10">
    <property type="entry name" value="Cell division topological specificity factor MinE"/>
    <property type="match status" value="1"/>
</dbReference>
<dbReference type="HAMAP" id="MF_00262">
    <property type="entry name" value="MinE"/>
    <property type="match status" value="1"/>
</dbReference>
<dbReference type="InterPro" id="IPR005527">
    <property type="entry name" value="MinE"/>
</dbReference>
<dbReference type="InterPro" id="IPR036707">
    <property type="entry name" value="MinE_sf"/>
</dbReference>
<dbReference type="NCBIfam" id="TIGR01215">
    <property type="entry name" value="minE"/>
    <property type="match status" value="1"/>
</dbReference>
<dbReference type="NCBIfam" id="NF001422">
    <property type="entry name" value="PRK00296.1"/>
    <property type="match status" value="1"/>
</dbReference>
<dbReference type="Pfam" id="PF03776">
    <property type="entry name" value="MinE"/>
    <property type="match status" value="1"/>
</dbReference>
<dbReference type="SUPFAM" id="SSF55229">
    <property type="entry name" value="Cell division protein MinE topological specificity domain"/>
    <property type="match status" value="1"/>
</dbReference>
<protein>
    <recommendedName>
        <fullName evidence="1">Cell division topological specificity factor</fullName>
    </recommendedName>
</protein>
<gene>
    <name evidence="1" type="primary">minE</name>
    <name type="ordered locus">Swoo_2112</name>
</gene>
<proteinExistence type="inferred from homology"/>
<name>MINE_SHEWM</name>
<keyword id="KW-0131">Cell cycle</keyword>
<keyword id="KW-0132">Cell division</keyword>
<keyword id="KW-1185">Reference proteome</keyword>
<organism>
    <name type="scientific">Shewanella woodyi (strain ATCC 51908 / MS32)</name>
    <dbReference type="NCBI Taxonomy" id="392500"/>
    <lineage>
        <taxon>Bacteria</taxon>
        <taxon>Pseudomonadati</taxon>
        <taxon>Pseudomonadota</taxon>
        <taxon>Gammaproteobacteria</taxon>
        <taxon>Alteromonadales</taxon>
        <taxon>Shewanellaceae</taxon>
        <taxon>Shewanella</taxon>
    </lineage>
</organism>
<reference key="1">
    <citation type="submission" date="2008-02" db="EMBL/GenBank/DDBJ databases">
        <title>Complete sequence of Shewanella woodyi ATCC 51908.</title>
        <authorList>
            <consortium name="US DOE Joint Genome Institute"/>
            <person name="Copeland A."/>
            <person name="Lucas S."/>
            <person name="Lapidus A."/>
            <person name="Glavina del Rio T."/>
            <person name="Dalin E."/>
            <person name="Tice H."/>
            <person name="Bruce D."/>
            <person name="Goodwin L."/>
            <person name="Pitluck S."/>
            <person name="Sims D."/>
            <person name="Brettin T."/>
            <person name="Detter J.C."/>
            <person name="Han C."/>
            <person name="Kuske C.R."/>
            <person name="Schmutz J."/>
            <person name="Larimer F."/>
            <person name="Land M."/>
            <person name="Hauser L."/>
            <person name="Kyrpides N."/>
            <person name="Lykidis A."/>
            <person name="Zhao J.-S."/>
            <person name="Richardson P."/>
        </authorList>
    </citation>
    <scope>NUCLEOTIDE SEQUENCE [LARGE SCALE GENOMIC DNA]</scope>
    <source>
        <strain>ATCC 51908 / MS32</strain>
    </source>
</reference>
<accession>B1KRI9</accession>